<accession>Q8YC99</accession>
<dbReference type="EMBL" id="AE008918">
    <property type="protein sequence ID" value="AAL53875.1"/>
    <property type="status" value="ALT_INIT"/>
    <property type="molecule type" value="Genomic_DNA"/>
</dbReference>
<dbReference type="PIR" id="AH3588">
    <property type="entry name" value="AH3588"/>
</dbReference>
<dbReference type="RefSeq" id="WP_004681928.1">
    <property type="nucleotide sequence ID" value="NZ_GG703779.1"/>
</dbReference>
<dbReference type="SMR" id="Q8YC99"/>
<dbReference type="KEGG" id="bme:BMEII0633"/>
<dbReference type="KEGG" id="bmel:DK63_2614"/>
<dbReference type="PATRIC" id="fig|224914.52.peg.2739"/>
<dbReference type="eggNOG" id="COG0683">
    <property type="taxonomic scope" value="Bacteria"/>
</dbReference>
<dbReference type="Proteomes" id="UP000000419">
    <property type="component" value="Chromosome II"/>
</dbReference>
<dbReference type="GO" id="GO:0006865">
    <property type="term" value="P:amino acid transport"/>
    <property type="evidence" value="ECO:0007669"/>
    <property type="project" value="UniProtKB-KW"/>
</dbReference>
<dbReference type="CDD" id="cd20013">
    <property type="entry name" value="PBP1_RPA0985_benzoate-like"/>
    <property type="match status" value="1"/>
</dbReference>
<dbReference type="Gene3D" id="3.40.50.2300">
    <property type="match status" value="2"/>
</dbReference>
<dbReference type="InterPro" id="IPR051010">
    <property type="entry name" value="BCAA_transport"/>
</dbReference>
<dbReference type="InterPro" id="IPR028081">
    <property type="entry name" value="Leu-bd"/>
</dbReference>
<dbReference type="InterPro" id="IPR000709">
    <property type="entry name" value="Leu_Ile_Val-bd"/>
</dbReference>
<dbReference type="InterPro" id="IPR028082">
    <property type="entry name" value="Peripla_BP_I"/>
</dbReference>
<dbReference type="PANTHER" id="PTHR30483">
    <property type="entry name" value="LEUCINE-SPECIFIC-BINDING PROTEIN"/>
    <property type="match status" value="1"/>
</dbReference>
<dbReference type="PANTHER" id="PTHR30483:SF6">
    <property type="entry name" value="PERIPLASMIC BINDING PROTEIN OF ABC TRANSPORTER FOR NATURAL AMINO ACIDS"/>
    <property type="match status" value="1"/>
</dbReference>
<dbReference type="Pfam" id="PF13458">
    <property type="entry name" value="Peripla_BP_6"/>
    <property type="match status" value="1"/>
</dbReference>
<dbReference type="PRINTS" id="PR00337">
    <property type="entry name" value="LEUILEVALBP"/>
</dbReference>
<dbReference type="SUPFAM" id="SSF53822">
    <property type="entry name" value="Periplasmic binding protein-like I"/>
    <property type="match status" value="1"/>
</dbReference>
<reference key="1">
    <citation type="journal article" date="2002" name="Proc. Natl. Acad. Sci. U.S.A.">
        <title>The genome sequence of the facultative intracellular pathogen Brucella melitensis.</title>
        <authorList>
            <person name="DelVecchio V.G."/>
            <person name="Kapatral V."/>
            <person name="Redkar R.J."/>
            <person name="Patra G."/>
            <person name="Mujer C."/>
            <person name="Los T."/>
            <person name="Ivanova N."/>
            <person name="Anderson I."/>
            <person name="Bhattacharyya A."/>
            <person name="Lykidis A."/>
            <person name="Reznik G."/>
            <person name="Jablonski L."/>
            <person name="Larsen N."/>
            <person name="D'Souza M."/>
            <person name="Bernal A."/>
            <person name="Mazur M."/>
            <person name="Goltsman E."/>
            <person name="Selkov E."/>
            <person name="Elzer P.H."/>
            <person name="Hagius S."/>
            <person name="O'Callaghan D."/>
            <person name="Letesson J.-J."/>
            <person name="Haselkorn R."/>
            <person name="Kyrpides N.C."/>
            <person name="Overbeek R."/>
        </authorList>
    </citation>
    <scope>NUCLEOTIDE SEQUENCE [LARGE SCALE GENOMIC DNA]</scope>
    <source>
        <strain>ATCC 23456 / CCUG 17765 / NCTC 10094 / 16M</strain>
    </source>
</reference>
<keyword id="KW-0029">Amino-acid transport</keyword>
<keyword id="KW-0732">Signal</keyword>
<keyword id="KW-0813">Transport</keyword>
<evidence type="ECO:0000255" key="1"/>
<evidence type="ECO:0000305" key="2"/>
<proteinExistence type="inferred from homology"/>
<gene>
    <name type="ordered locus">BMEII0633</name>
</gene>
<name>LIVB6_BRUME</name>
<feature type="signal peptide" evidence="1">
    <location>
        <begin position="1"/>
        <end position="21"/>
    </location>
</feature>
<feature type="chain" id="PRO_0000282531" description="Leu/Ile/Val-binding protein homolog 6">
    <location>
        <begin position="22"/>
        <end position="390"/>
    </location>
</feature>
<organism>
    <name type="scientific">Brucella melitensis biotype 1 (strain ATCC 23456 / CCUG 17765 / NCTC 10094 / 16M)</name>
    <dbReference type="NCBI Taxonomy" id="224914"/>
    <lineage>
        <taxon>Bacteria</taxon>
        <taxon>Pseudomonadati</taxon>
        <taxon>Pseudomonadota</taxon>
        <taxon>Alphaproteobacteria</taxon>
        <taxon>Hyphomicrobiales</taxon>
        <taxon>Brucellaceae</taxon>
        <taxon>Brucella/Ochrobactrum group</taxon>
        <taxon>Brucella</taxon>
    </lineage>
</organism>
<comment type="function">
    <text evidence="2">Component of an amino-acid transport system.</text>
</comment>
<comment type="similarity">
    <text evidence="2">Belongs to the leucine-binding protein family.</text>
</comment>
<comment type="sequence caution" evidence="2">
    <conflict type="erroneous initiation">
        <sequence resource="EMBL-CDS" id="AAL53875"/>
    </conflict>
</comment>
<protein>
    <recommendedName>
        <fullName>Leu/Ile/Val-binding protein homolog 6</fullName>
    </recommendedName>
</protein>
<sequence length="390" mass="41586">MKKIALTALAVFSLAASAAYADVVKVGVIGPFSGPFALQGKNFKAGIDAYMAEHGNKVGDDTVEVVYRDVPQADPAQSKALAQELVVKEGVQYLAGFYFTPDAMAVTPILKQGNVPMVVMNAATSSIVTKSPYVVRTSFTTWQTSTPIARVALDKGVKKVISVVSDYGPGVDAENAFKAAFTDAGGEVVEAIRMPLATNDFSPIMQRIKDSGAQGVFAFLPSGPTTLGFMKAYVDNGLKSSGIQLFAPGDLTQESDLPALGENALGVLTTFHYAVSHDSPENRKFVEEARKAIGNPAELSFPSVGAYDGMHVIYKMIEATGGKKDAAKAVEAVKGMEWVSPRGPVSIDPESRHITQNIYLREVAKADDGTYYNKEIQTFEKQGDPGLKAQ</sequence>